<protein>
    <recommendedName>
        <fullName evidence="1">Small ribosomal subunit protein uS4</fullName>
    </recommendedName>
    <alternativeName>
        <fullName evidence="3">30S ribosomal protein S4</fullName>
    </alternativeName>
</protein>
<sequence>MARYTGPSWKVSRRLGISLSGTGKELERRPYAPGQHGPTQRKKISEYGLQQAEKQKLRHMYGLTERQFKNTFNKAGKLQGKHGENFMILLEQRLDNIVYRLGLARTRRAARQLVNHGHITVDGKRVDIPSYQVSVGQVISVREKSAKNSAIAESLEVSSFVPEYVTFDAEKLTGSLNRLPERSELAAEINEAFIVEFYSR</sequence>
<dbReference type="EMBL" id="CP001175">
    <property type="protein sequence ID" value="ACK39314.1"/>
    <property type="molecule type" value="Genomic_DNA"/>
</dbReference>
<dbReference type="RefSeq" id="WP_003723325.1">
    <property type="nucleotide sequence ID" value="NC_011660.1"/>
</dbReference>
<dbReference type="SMR" id="B8DHE5"/>
<dbReference type="GeneID" id="93239475"/>
<dbReference type="KEGG" id="lmh:LMHCC_0966"/>
<dbReference type="HOGENOM" id="CLU_092403_0_1_9"/>
<dbReference type="GO" id="GO:0015935">
    <property type="term" value="C:small ribosomal subunit"/>
    <property type="evidence" value="ECO:0007669"/>
    <property type="project" value="InterPro"/>
</dbReference>
<dbReference type="GO" id="GO:0019843">
    <property type="term" value="F:rRNA binding"/>
    <property type="evidence" value="ECO:0007669"/>
    <property type="project" value="UniProtKB-UniRule"/>
</dbReference>
<dbReference type="GO" id="GO:0003735">
    <property type="term" value="F:structural constituent of ribosome"/>
    <property type="evidence" value="ECO:0007669"/>
    <property type="project" value="InterPro"/>
</dbReference>
<dbReference type="GO" id="GO:0042274">
    <property type="term" value="P:ribosomal small subunit biogenesis"/>
    <property type="evidence" value="ECO:0007669"/>
    <property type="project" value="TreeGrafter"/>
</dbReference>
<dbReference type="GO" id="GO:0006412">
    <property type="term" value="P:translation"/>
    <property type="evidence" value="ECO:0007669"/>
    <property type="project" value="UniProtKB-UniRule"/>
</dbReference>
<dbReference type="CDD" id="cd00165">
    <property type="entry name" value="S4"/>
    <property type="match status" value="1"/>
</dbReference>
<dbReference type="FunFam" id="1.10.1050.10:FF:000001">
    <property type="entry name" value="30S ribosomal protein S4"/>
    <property type="match status" value="1"/>
</dbReference>
<dbReference type="FunFam" id="3.10.290.10:FF:000001">
    <property type="entry name" value="30S ribosomal protein S4"/>
    <property type="match status" value="1"/>
</dbReference>
<dbReference type="Gene3D" id="1.10.1050.10">
    <property type="entry name" value="Ribosomal Protein S4 Delta 41, Chain A, domain 1"/>
    <property type="match status" value="1"/>
</dbReference>
<dbReference type="Gene3D" id="3.10.290.10">
    <property type="entry name" value="RNA-binding S4 domain"/>
    <property type="match status" value="1"/>
</dbReference>
<dbReference type="HAMAP" id="MF_01306_B">
    <property type="entry name" value="Ribosomal_uS4_B"/>
    <property type="match status" value="1"/>
</dbReference>
<dbReference type="InterPro" id="IPR022801">
    <property type="entry name" value="Ribosomal_uS4"/>
</dbReference>
<dbReference type="InterPro" id="IPR005709">
    <property type="entry name" value="Ribosomal_uS4_bac-type"/>
</dbReference>
<dbReference type="InterPro" id="IPR018079">
    <property type="entry name" value="Ribosomal_uS4_CS"/>
</dbReference>
<dbReference type="InterPro" id="IPR001912">
    <property type="entry name" value="Ribosomal_uS4_N"/>
</dbReference>
<dbReference type="InterPro" id="IPR002942">
    <property type="entry name" value="S4_RNA-bd"/>
</dbReference>
<dbReference type="InterPro" id="IPR036986">
    <property type="entry name" value="S4_RNA-bd_sf"/>
</dbReference>
<dbReference type="NCBIfam" id="NF003717">
    <property type="entry name" value="PRK05327.1"/>
    <property type="match status" value="1"/>
</dbReference>
<dbReference type="NCBIfam" id="TIGR01017">
    <property type="entry name" value="rpsD_bact"/>
    <property type="match status" value="1"/>
</dbReference>
<dbReference type="PANTHER" id="PTHR11831">
    <property type="entry name" value="30S 40S RIBOSOMAL PROTEIN"/>
    <property type="match status" value="1"/>
</dbReference>
<dbReference type="PANTHER" id="PTHR11831:SF4">
    <property type="entry name" value="SMALL RIBOSOMAL SUBUNIT PROTEIN US4M"/>
    <property type="match status" value="1"/>
</dbReference>
<dbReference type="Pfam" id="PF00163">
    <property type="entry name" value="Ribosomal_S4"/>
    <property type="match status" value="1"/>
</dbReference>
<dbReference type="Pfam" id="PF01479">
    <property type="entry name" value="S4"/>
    <property type="match status" value="1"/>
</dbReference>
<dbReference type="SMART" id="SM01390">
    <property type="entry name" value="Ribosomal_S4"/>
    <property type="match status" value="1"/>
</dbReference>
<dbReference type="SMART" id="SM00363">
    <property type="entry name" value="S4"/>
    <property type="match status" value="1"/>
</dbReference>
<dbReference type="SUPFAM" id="SSF55174">
    <property type="entry name" value="Alpha-L RNA-binding motif"/>
    <property type="match status" value="1"/>
</dbReference>
<dbReference type="PROSITE" id="PS00632">
    <property type="entry name" value="RIBOSOMAL_S4"/>
    <property type="match status" value="1"/>
</dbReference>
<dbReference type="PROSITE" id="PS50889">
    <property type="entry name" value="S4"/>
    <property type="match status" value="1"/>
</dbReference>
<accession>B8DHE5</accession>
<evidence type="ECO:0000255" key="1">
    <source>
        <dbReference type="HAMAP-Rule" id="MF_01306"/>
    </source>
</evidence>
<evidence type="ECO:0000256" key="2">
    <source>
        <dbReference type="SAM" id="MobiDB-lite"/>
    </source>
</evidence>
<evidence type="ECO:0000305" key="3"/>
<organism>
    <name type="scientific">Listeria monocytogenes serotype 4a (strain HCC23)</name>
    <dbReference type="NCBI Taxonomy" id="552536"/>
    <lineage>
        <taxon>Bacteria</taxon>
        <taxon>Bacillati</taxon>
        <taxon>Bacillota</taxon>
        <taxon>Bacilli</taxon>
        <taxon>Bacillales</taxon>
        <taxon>Listeriaceae</taxon>
        <taxon>Listeria</taxon>
    </lineage>
</organism>
<name>RS4_LISMH</name>
<proteinExistence type="inferred from homology"/>
<keyword id="KW-0687">Ribonucleoprotein</keyword>
<keyword id="KW-0689">Ribosomal protein</keyword>
<keyword id="KW-0694">RNA-binding</keyword>
<keyword id="KW-0699">rRNA-binding</keyword>
<feature type="chain" id="PRO_1000165408" description="Small ribosomal subunit protein uS4">
    <location>
        <begin position="1"/>
        <end position="200"/>
    </location>
</feature>
<feature type="domain" description="S4 RNA-binding" evidence="1">
    <location>
        <begin position="92"/>
        <end position="170"/>
    </location>
</feature>
<feature type="region of interest" description="Disordered" evidence="2">
    <location>
        <begin position="22"/>
        <end position="43"/>
    </location>
</feature>
<reference key="1">
    <citation type="journal article" date="2011" name="J. Bacteriol.">
        <title>Genome sequence of lineage III Listeria monocytogenes strain HCC23.</title>
        <authorList>
            <person name="Steele C.L."/>
            <person name="Donaldson J.R."/>
            <person name="Paul D."/>
            <person name="Banes M.M."/>
            <person name="Arick T."/>
            <person name="Bridges S.M."/>
            <person name="Lawrence M.L."/>
        </authorList>
    </citation>
    <scope>NUCLEOTIDE SEQUENCE [LARGE SCALE GENOMIC DNA]</scope>
    <source>
        <strain>HCC23</strain>
    </source>
</reference>
<comment type="function">
    <text evidence="1">One of the primary rRNA binding proteins, it binds directly to 16S rRNA where it nucleates assembly of the body of the 30S subunit.</text>
</comment>
<comment type="function">
    <text evidence="1">With S5 and S12 plays an important role in translational accuracy.</text>
</comment>
<comment type="subunit">
    <text evidence="1">Part of the 30S ribosomal subunit. Contacts protein S5. The interaction surface between S4 and S5 is involved in control of translational fidelity.</text>
</comment>
<comment type="similarity">
    <text evidence="1">Belongs to the universal ribosomal protein uS4 family.</text>
</comment>
<gene>
    <name evidence="1" type="primary">rpsD</name>
    <name type="ordered locus">LMHCC_0966</name>
</gene>